<organism>
    <name type="scientific">Escherichia coli (strain K12 / DH10B)</name>
    <dbReference type="NCBI Taxonomy" id="316385"/>
    <lineage>
        <taxon>Bacteria</taxon>
        <taxon>Pseudomonadati</taxon>
        <taxon>Pseudomonadota</taxon>
        <taxon>Gammaproteobacteria</taxon>
        <taxon>Enterobacterales</taxon>
        <taxon>Enterobacteriaceae</taxon>
        <taxon>Escherichia</taxon>
    </lineage>
</organism>
<accession>B1XB33</accession>
<sequence length="518" mass="58302">MKKLKINYLFIGILALLLAVALWPSIPWFGKADNRIAAIQARGELRVSTIHTPLTYNEINGKPFGLDYELAKQFADYLGVKLKVTVRQNISQLFDDLDNGNADLLAAGLVYNSERVKNYQPGPTYYSVSQQLVYKVGQYRPRTLGNLTAEQLTVAPGHVVVNDLQTLKETKFPELSWKVDDKKGSAELMEDVIEGKLDYTIADSVAISLFQRVHPELAVALDITDEQPVTWFSPLDGDNTLSAALLDFFNEMNEDGTLARIEEKYLGHGDDFDYVDTRTFLRAVDAVLPQLKPLFEKYAEEIDWRLLAAIAYQESHWDAQATSPTGVRGMMMLTKNTAQSLGITDRTDAEQSISGGVRYLQDMMSKVPESVPENERIWFALAAYNMGYAHMLDARALTAKTKGNPDSWADVKQRLPLLSQKPYYSKLTYGYARGHEAYAYVENIRKYQISLVGYLQEKEKQATEAAMQLAQDYPAVSPTELGKEKFPFLSFLSQSSSNYLTHSPSLLFSRKGSEEKQN</sequence>
<keyword id="KW-0998">Cell outer membrane</keyword>
<keyword id="KW-0961">Cell wall biogenesis/degradation</keyword>
<keyword id="KW-0456">Lyase</keyword>
<keyword id="KW-0472">Membrane</keyword>
<keyword id="KW-0732">Signal</keyword>
<reference key="1">
    <citation type="journal article" date="2008" name="J. Bacteriol.">
        <title>The complete genome sequence of Escherichia coli DH10B: insights into the biology of a laboratory workhorse.</title>
        <authorList>
            <person name="Durfee T."/>
            <person name="Nelson R."/>
            <person name="Baldwin S."/>
            <person name="Plunkett G. III"/>
            <person name="Burland V."/>
            <person name="Mau B."/>
            <person name="Petrosino J.F."/>
            <person name="Qin X."/>
            <person name="Muzny D.M."/>
            <person name="Ayele M."/>
            <person name="Gibbs R.A."/>
            <person name="Csorgo B."/>
            <person name="Posfai G."/>
            <person name="Weinstock G.M."/>
            <person name="Blattner F.R."/>
        </authorList>
    </citation>
    <scope>NUCLEOTIDE SEQUENCE [LARGE SCALE GENOMIC DNA]</scope>
    <source>
        <strain>K12 / DH10B</strain>
    </source>
</reference>
<comment type="function">
    <text evidence="1">Murein-degrading enzyme that degrades murein glycan strands and insoluble, high-molecular weight murein sacculi, with the concomitant formation of a 1,6-anhydromuramoyl product. Lytic transglycosylases (LTs) play an integral role in the metabolism of the peptidoglycan (PG) sacculus. Their lytic action creates space within the PG sacculus to allow for its expansion as well as for the insertion of various structures such as secretion systems and flagella.</text>
</comment>
<comment type="catalytic activity">
    <reaction evidence="1">
        <text>Exolytic cleavage of the (1-&gt;4)-beta-glycosidic linkage between N-acetylmuramic acid (MurNAc) and N-acetylglucosamine (GlcNAc) residues in peptidoglycan, from either the reducing or the non-reducing ends of the peptidoglycan chains, with concomitant formation of a 1,6-anhydrobond in the MurNAc residue.</text>
        <dbReference type="EC" id="4.2.2.n1"/>
    </reaction>
</comment>
<comment type="subcellular location">
    <subcellularLocation>
        <location>Cell outer membrane</location>
        <topology>Peripheral membrane protein</topology>
    </subcellularLocation>
    <text evidence="1">Attached to the inner leaflet of the outer membrane.</text>
</comment>
<comment type="domain">
    <text evidence="1">The N-terminal domain does not have lytic activity and probably modulates enzymatic activity. The C-terminal domain is the catalytic active domain.</text>
</comment>
<comment type="similarity">
    <text evidence="1">In the N-terminal section; belongs to the bacterial solute-binding protein 3 family.</text>
</comment>
<comment type="similarity">
    <text evidence="1">In the C-terminal section; belongs to the transglycosylase Slt family.</text>
</comment>
<comment type="sequence caution" evidence="2">
    <conflict type="erroneous initiation">
        <sequence resource="EMBL-CDS" id="ACB03710"/>
    </conflict>
</comment>
<protein>
    <recommendedName>
        <fullName evidence="1">Membrane-bound lytic murein transglycosylase F</fullName>
        <ecNumber evidence="1">4.2.2.n1</ecNumber>
    </recommendedName>
    <alternativeName>
        <fullName evidence="1">Murein lyase F</fullName>
    </alternativeName>
</protein>
<evidence type="ECO:0000255" key="1">
    <source>
        <dbReference type="HAMAP-Rule" id="MF_02016"/>
    </source>
</evidence>
<evidence type="ECO:0000305" key="2"/>
<dbReference type="EC" id="4.2.2.n1" evidence="1"/>
<dbReference type="EMBL" id="CP000948">
    <property type="protein sequence ID" value="ACB03710.1"/>
    <property type="status" value="ALT_INIT"/>
    <property type="molecule type" value="Genomic_DNA"/>
</dbReference>
<dbReference type="RefSeq" id="WP_000734212.1">
    <property type="nucleotide sequence ID" value="NC_010473.1"/>
</dbReference>
<dbReference type="SMR" id="B1XB33"/>
<dbReference type="CAZy" id="GH23">
    <property type="family name" value="Glycoside Hydrolase Family 23"/>
</dbReference>
<dbReference type="GeneID" id="75206251"/>
<dbReference type="KEGG" id="ecd:ECDH10B_2726"/>
<dbReference type="HOGENOM" id="CLU_027494_0_1_6"/>
<dbReference type="GO" id="GO:0009279">
    <property type="term" value="C:cell outer membrane"/>
    <property type="evidence" value="ECO:0007669"/>
    <property type="project" value="UniProtKB-SubCell"/>
</dbReference>
<dbReference type="GO" id="GO:0008933">
    <property type="term" value="F:peptidoglycan lytic transglycosylase activity"/>
    <property type="evidence" value="ECO:0007669"/>
    <property type="project" value="UniProtKB-UniRule"/>
</dbReference>
<dbReference type="GO" id="GO:0016998">
    <property type="term" value="P:cell wall macromolecule catabolic process"/>
    <property type="evidence" value="ECO:0007669"/>
    <property type="project" value="UniProtKB-UniRule"/>
</dbReference>
<dbReference type="GO" id="GO:0071555">
    <property type="term" value="P:cell wall organization"/>
    <property type="evidence" value="ECO:0007669"/>
    <property type="project" value="UniProtKB-KW"/>
</dbReference>
<dbReference type="GO" id="GO:0009253">
    <property type="term" value="P:peptidoglycan catabolic process"/>
    <property type="evidence" value="ECO:0007669"/>
    <property type="project" value="TreeGrafter"/>
</dbReference>
<dbReference type="CDD" id="cd13403">
    <property type="entry name" value="MLTF-like"/>
    <property type="match status" value="1"/>
</dbReference>
<dbReference type="CDD" id="cd01009">
    <property type="entry name" value="PBP2_YfhD_N"/>
    <property type="match status" value="1"/>
</dbReference>
<dbReference type="FunFam" id="1.10.530.10:FF:000003">
    <property type="entry name" value="Membrane-bound lytic murein transglycosylase F"/>
    <property type="match status" value="1"/>
</dbReference>
<dbReference type="FunFam" id="3.40.190.10:FF:000051">
    <property type="entry name" value="Membrane-bound lytic murein transglycosylase F"/>
    <property type="match status" value="1"/>
</dbReference>
<dbReference type="Gene3D" id="1.10.530.10">
    <property type="match status" value="1"/>
</dbReference>
<dbReference type="Gene3D" id="3.40.190.10">
    <property type="entry name" value="Periplasmic binding protein-like II"/>
    <property type="match status" value="2"/>
</dbReference>
<dbReference type="HAMAP" id="MF_02016">
    <property type="entry name" value="MltF"/>
    <property type="match status" value="1"/>
</dbReference>
<dbReference type="InterPro" id="IPR023346">
    <property type="entry name" value="Lysozyme-like_dom_sf"/>
</dbReference>
<dbReference type="InterPro" id="IPR023703">
    <property type="entry name" value="MltF"/>
</dbReference>
<dbReference type="InterPro" id="IPR001638">
    <property type="entry name" value="Solute-binding_3/MltF_N"/>
</dbReference>
<dbReference type="InterPro" id="IPR000189">
    <property type="entry name" value="Transglyc_AS"/>
</dbReference>
<dbReference type="InterPro" id="IPR008258">
    <property type="entry name" value="Transglycosylase_SLT_dom_1"/>
</dbReference>
<dbReference type="NCBIfam" id="NF008112">
    <property type="entry name" value="PRK10859.1"/>
    <property type="match status" value="1"/>
</dbReference>
<dbReference type="PANTHER" id="PTHR35936">
    <property type="entry name" value="MEMBRANE-BOUND LYTIC MUREIN TRANSGLYCOSYLASE F"/>
    <property type="match status" value="1"/>
</dbReference>
<dbReference type="PANTHER" id="PTHR35936:SF32">
    <property type="entry name" value="MEMBRANE-BOUND LYTIC MUREIN TRANSGLYCOSYLASE F"/>
    <property type="match status" value="1"/>
</dbReference>
<dbReference type="Pfam" id="PF00497">
    <property type="entry name" value="SBP_bac_3"/>
    <property type="match status" value="1"/>
</dbReference>
<dbReference type="Pfam" id="PF01464">
    <property type="entry name" value="SLT"/>
    <property type="match status" value="1"/>
</dbReference>
<dbReference type="SMART" id="SM00062">
    <property type="entry name" value="PBPb"/>
    <property type="match status" value="1"/>
</dbReference>
<dbReference type="SUPFAM" id="SSF53955">
    <property type="entry name" value="Lysozyme-like"/>
    <property type="match status" value="1"/>
</dbReference>
<dbReference type="SUPFAM" id="SSF53850">
    <property type="entry name" value="Periplasmic binding protein-like II"/>
    <property type="match status" value="1"/>
</dbReference>
<dbReference type="PROSITE" id="PS00922">
    <property type="entry name" value="TRANSGLYCOSYLASE"/>
    <property type="match status" value="1"/>
</dbReference>
<name>MLTF_ECODH</name>
<feature type="signal peptide" evidence="1">
    <location>
        <begin position="1"/>
        <end position="21"/>
    </location>
</feature>
<feature type="chain" id="PRO_0000353929" description="Membrane-bound lytic murein transglycosylase F">
    <location>
        <begin position="22"/>
        <end position="518"/>
    </location>
</feature>
<feature type="region of interest" description="Non-LT domain" evidence="1">
    <location>
        <begin position="22"/>
        <end position="269"/>
    </location>
</feature>
<feature type="region of interest" description="LT domain" evidence="1">
    <location>
        <begin position="270"/>
        <end position="518"/>
    </location>
</feature>
<feature type="active site" evidence="1">
    <location>
        <position position="314"/>
    </location>
</feature>
<proteinExistence type="inferred from homology"/>
<gene>
    <name evidence="1" type="primary">mltF</name>
    <name type="ordered locus">ECDH10B_2726</name>
</gene>